<name>CXCR4_FELCA</name>
<dbReference type="EMBL" id="U63558">
    <property type="protein sequence ID" value="AAC48852.1"/>
    <property type="molecule type" value="mRNA"/>
</dbReference>
<dbReference type="EMBL" id="U92795">
    <property type="protein sequence ID" value="AAB51765.1"/>
    <property type="molecule type" value="mRNA"/>
</dbReference>
<dbReference type="EMBL" id="AJ009816">
    <property type="protein sequence ID" value="CAA08839.1"/>
    <property type="molecule type" value="mRNA"/>
</dbReference>
<dbReference type="RefSeq" id="NP_001009826.1">
    <property type="nucleotide sequence ID" value="NM_001009826.1"/>
</dbReference>
<dbReference type="SMR" id="P56498"/>
<dbReference type="FunCoup" id="P56498">
    <property type="interactions" value="45"/>
</dbReference>
<dbReference type="STRING" id="9685.ENSFCAP00000060751"/>
<dbReference type="GlyCosmos" id="P56498">
    <property type="glycosylation" value="2 sites, No reported glycans"/>
</dbReference>
<dbReference type="PaxDb" id="9685-ENSFCAP00000014443"/>
<dbReference type="Ensembl" id="ENSFCAT00000015579.5">
    <property type="protein sequence ID" value="ENSFCAP00000014443.2"/>
    <property type="gene ID" value="ENSFCAG00000015575.5"/>
</dbReference>
<dbReference type="GeneID" id="493676"/>
<dbReference type="KEGG" id="fca:493676"/>
<dbReference type="CTD" id="7852"/>
<dbReference type="VGNC" id="VGNC:61299">
    <property type="gene designation" value="CXCR4"/>
</dbReference>
<dbReference type="eggNOG" id="KOG3656">
    <property type="taxonomic scope" value="Eukaryota"/>
</dbReference>
<dbReference type="GeneTree" id="ENSGT01050000244848"/>
<dbReference type="HOGENOM" id="CLU_009579_8_3_1"/>
<dbReference type="InParanoid" id="P56498"/>
<dbReference type="OrthoDB" id="5814848at2759"/>
<dbReference type="TreeFam" id="TF330966"/>
<dbReference type="Proteomes" id="UP000011712">
    <property type="component" value="Chromosome C1"/>
</dbReference>
<dbReference type="Bgee" id="ENSFCAG00000015575">
    <property type="expression patterns" value="Expressed in uterus and 10 other cell types or tissues"/>
</dbReference>
<dbReference type="GO" id="GO:0070161">
    <property type="term" value="C:anchoring junction"/>
    <property type="evidence" value="ECO:0007669"/>
    <property type="project" value="UniProtKB-SubCell"/>
</dbReference>
<dbReference type="GO" id="GO:0031252">
    <property type="term" value="C:cell leading edge"/>
    <property type="evidence" value="ECO:0007669"/>
    <property type="project" value="Ensembl"/>
</dbReference>
<dbReference type="GO" id="GO:0005769">
    <property type="term" value="C:early endosome"/>
    <property type="evidence" value="ECO:0000250"/>
    <property type="project" value="UniProtKB"/>
</dbReference>
<dbReference type="GO" id="GO:0009897">
    <property type="term" value="C:external side of plasma membrane"/>
    <property type="evidence" value="ECO:0000318"/>
    <property type="project" value="GO_Central"/>
</dbReference>
<dbReference type="GO" id="GO:0005770">
    <property type="term" value="C:late endosome"/>
    <property type="evidence" value="ECO:0000250"/>
    <property type="project" value="UniProtKB"/>
</dbReference>
<dbReference type="GO" id="GO:0005764">
    <property type="term" value="C:lysosome"/>
    <property type="evidence" value="ECO:0000250"/>
    <property type="project" value="UniProtKB"/>
</dbReference>
<dbReference type="GO" id="GO:0005886">
    <property type="term" value="C:plasma membrane"/>
    <property type="evidence" value="ECO:0000250"/>
    <property type="project" value="UniProtKB"/>
</dbReference>
<dbReference type="GO" id="GO:0032991">
    <property type="term" value="C:protein-containing complex"/>
    <property type="evidence" value="ECO:0007669"/>
    <property type="project" value="Ensembl"/>
</dbReference>
<dbReference type="GO" id="GO:0003779">
    <property type="term" value="F:actin binding"/>
    <property type="evidence" value="ECO:0007669"/>
    <property type="project" value="Ensembl"/>
</dbReference>
<dbReference type="GO" id="GO:0019957">
    <property type="term" value="F:C-C chemokine binding"/>
    <property type="evidence" value="ECO:0000318"/>
    <property type="project" value="GO_Central"/>
</dbReference>
<dbReference type="GO" id="GO:0016493">
    <property type="term" value="F:C-C chemokine receptor activity"/>
    <property type="evidence" value="ECO:0000318"/>
    <property type="project" value="GO_Central"/>
</dbReference>
<dbReference type="GO" id="GO:0038147">
    <property type="term" value="F:C-X-C motif chemokine 12 receptor activity"/>
    <property type="evidence" value="ECO:0000250"/>
    <property type="project" value="UniProtKB"/>
</dbReference>
<dbReference type="GO" id="GO:0032027">
    <property type="term" value="F:myosin light chain binding"/>
    <property type="evidence" value="ECO:0007669"/>
    <property type="project" value="Ensembl"/>
</dbReference>
<dbReference type="GO" id="GO:0043130">
    <property type="term" value="F:ubiquitin binding"/>
    <property type="evidence" value="ECO:0007669"/>
    <property type="project" value="Ensembl"/>
</dbReference>
<dbReference type="GO" id="GO:0031625">
    <property type="term" value="F:ubiquitin protein ligase binding"/>
    <property type="evidence" value="ECO:0007669"/>
    <property type="project" value="Ensembl"/>
</dbReference>
<dbReference type="GO" id="GO:0007420">
    <property type="term" value="P:brain development"/>
    <property type="evidence" value="ECO:0000318"/>
    <property type="project" value="GO_Central"/>
</dbReference>
<dbReference type="GO" id="GO:0019722">
    <property type="term" value="P:calcium-mediated signaling"/>
    <property type="evidence" value="ECO:0000318"/>
    <property type="project" value="GO_Central"/>
</dbReference>
<dbReference type="GO" id="GO:0060326">
    <property type="term" value="P:cell chemotaxis"/>
    <property type="evidence" value="ECO:0000318"/>
    <property type="project" value="GO_Central"/>
</dbReference>
<dbReference type="GO" id="GO:0071345">
    <property type="term" value="P:cellular response to cytokine stimulus"/>
    <property type="evidence" value="ECO:0000250"/>
    <property type="project" value="UniProtKB"/>
</dbReference>
<dbReference type="GO" id="GO:0038160">
    <property type="term" value="P:CXCL12-activated CXCR4 signaling pathway"/>
    <property type="evidence" value="ECO:0000250"/>
    <property type="project" value="UniProtKB"/>
</dbReference>
<dbReference type="GO" id="GO:0006955">
    <property type="term" value="P:immune response"/>
    <property type="evidence" value="ECO:0000318"/>
    <property type="project" value="GO_Central"/>
</dbReference>
<dbReference type="GO" id="GO:0022008">
    <property type="term" value="P:neurogenesis"/>
    <property type="evidence" value="ECO:0000318"/>
    <property type="project" value="GO_Central"/>
</dbReference>
<dbReference type="GO" id="GO:0030335">
    <property type="term" value="P:positive regulation of cell migration"/>
    <property type="evidence" value="ECO:0007669"/>
    <property type="project" value="Ensembl"/>
</dbReference>
<dbReference type="GO" id="GO:0007204">
    <property type="term" value="P:positive regulation of cytosolic calcium ion concentration"/>
    <property type="evidence" value="ECO:0000318"/>
    <property type="project" value="GO_Central"/>
</dbReference>
<dbReference type="GO" id="GO:2000448">
    <property type="term" value="P:positive regulation of macrophage migration inhibitory factor signaling pathway"/>
    <property type="evidence" value="ECO:0007669"/>
    <property type="project" value="Ensembl"/>
</dbReference>
<dbReference type="GO" id="GO:1904018">
    <property type="term" value="P:positive regulation of vasculature development"/>
    <property type="evidence" value="ECO:0007669"/>
    <property type="project" value="Ensembl"/>
</dbReference>
<dbReference type="GO" id="GO:0030155">
    <property type="term" value="P:regulation of cell adhesion"/>
    <property type="evidence" value="ECO:0007669"/>
    <property type="project" value="Ensembl"/>
</dbReference>
<dbReference type="GO" id="GO:0050920">
    <property type="term" value="P:regulation of chemotaxis"/>
    <property type="evidence" value="ECO:0007669"/>
    <property type="project" value="Ensembl"/>
</dbReference>
<dbReference type="GO" id="GO:0001666">
    <property type="term" value="P:response to hypoxia"/>
    <property type="evidence" value="ECO:0007669"/>
    <property type="project" value="Ensembl"/>
</dbReference>
<dbReference type="CDD" id="cd15179">
    <property type="entry name" value="7tmA_CXCR4"/>
    <property type="match status" value="1"/>
</dbReference>
<dbReference type="FunFam" id="1.20.1070.10:FF:000063">
    <property type="entry name" value="C-X-C chemokine receptor type 4"/>
    <property type="match status" value="1"/>
</dbReference>
<dbReference type="Gene3D" id="1.20.1070.10">
    <property type="entry name" value="Rhodopsin 7-helix transmembrane proteins"/>
    <property type="match status" value="1"/>
</dbReference>
<dbReference type="InterPro" id="IPR050119">
    <property type="entry name" value="CCR1-9-like"/>
</dbReference>
<dbReference type="InterPro" id="IPR022726">
    <property type="entry name" value="Chemokine_CXCR4_N_dom"/>
</dbReference>
<dbReference type="InterPro" id="IPR000355">
    <property type="entry name" value="Chemokine_rcpt"/>
</dbReference>
<dbReference type="InterPro" id="IPR001277">
    <property type="entry name" value="CXCR4/ACKR2"/>
</dbReference>
<dbReference type="InterPro" id="IPR000276">
    <property type="entry name" value="GPCR_Rhodpsn"/>
</dbReference>
<dbReference type="InterPro" id="IPR017452">
    <property type="entry name" value="GPCR_Rhodpsn_7TM"/>
</dbReference>
<dbReference type="PANTHER" id="PTHR10489:SF594">
    <property type="entry name" value="C-X-C CHEMOKINE RECEPTOR TYPE 4"/>
    <property type="match status" value="1"/>
</dbReference>
<dbReference type="PANTHER" id="PTHR10489">
    <property type="entry name" value="CELL ADHESION MOLECULE"/>
    <property type="match status" value="1"/>
</dbReference>
<dbReference type="Pfam" id="PF00001">
    <property type="entry name" value="7tm_1"/>
    <property type="match status" value="1"/>
</dbReference>
<dbReference type="Pfam" id="PF12109">
    <property type="entry name" value="CXCR4_N"/>
    <property type="match status" value="1"/>
</dbReference>
<dbReference type="PRINTS" id="PR00657">
    <property type="entry name" value="CCCHEMOKINER"/>
</dbReference>
<dbReference type="PRINTS" id="PR00645">
    <property type="entry name" value="CXCCHMKINER4"/>
</dbReference>
<dbReference type="PRINTS" id="PR00237">
    <property type="entry name" value="GPCRRHODOPSN"/>
</dbReference>
<dbReference type="SUPFAM" id="SSF81321">
    <property type="entry name" value="Family A G protein-coupled receptor-like"/>
    <property type="match status" value="1"/>
</dbReference>
<dbReference type="PROSITE" id="PS00237">
    <property type="entry name" value="G_PROTEIN_RECEP_F1_1"/>
    <property type="match status" value="1"/>
</dbReference>
<dbReference type="PROSITE" id="PS50262">
    <property type="entry name" value="G_PROTEIN_RECEP_F1_2"/>
    <property type="match status" value="1"/>
</dbReference>
<gene>
    <name type="primary">CXCR4</name>
</gene>
<protein>
    <recommendedName>
        <fullName>C-X-C chemokine receptor type 4</fullName>
        <shortName>CXC-R4</shortName>
        <shortName>CXCR-4</shortName>
    </recommendedName>
    <alternativeName>
        <fullName>Fusin</fullName>
    </alternativeName>
    <alternativeName>
        <fullName>Leukocyte-derived seven transmembrane domain receptor</fullName>
        <shortName>LESTR</shortName>
    </alternativeName>
    <alternativeName>
        <fullName>Stromal cell-derived factor 1 receptor</fullName>
        <shortName>SDF-1 receptor</shortName>
    </alternativeName>
    <cdAntigenName>CD184</cdAntigenName>
</protein>
<organism>
    <name type="scientific">Felis catus</name>
    <name type="common">Cat</name>
    <name type="synonym">Felis silvestris catus</name>
    <dbReference type="NCBI Taxonomy" id="9685"/>
    <lineage>
        <taxon>Eukaryota</taxon>
        <taxon>Metazoa</taxon>
        <taxon>Chordata</taxon>
        <taxon>Craniata</taxon>
        <taxon>Vertebrata</taxon>
        <taxon>Euteleostomi</taxon>
        <taxon>Mammalia</taxon>
        <taxon>Eutheria</taxon>
        <taxon>Laurasiatheria</taxon>
        <taxon>Carnivora</taxon>
        <taxon>Feliformia</taxon>
        <taxon>Felidae</taxon>
        <taxon>Felinae</taxon>
        <taxon>Felis</taxon>
    </lineage>
</organism>
<keyword id="KW-0965">Cell junction</keyword>
<keyword id="KW-1003">Cell membrane</keyword>
<keyword id="KW-1015">Disulfide bond</keyword>
<keyword id="KW-0967">Endosome</keyword>
<keyword id="KW-0297">G-protein coupled receptor</keyword>
<keyword id="KW-0325">Glycoprotein</keyword>
<keyword id="KW-0945">Host-virus interaction</keyword>
<keyword id="KW-1017">Isopeptide bond</keyword>
<keyword id="KW-0458">Lysosome</keyword>
<keyword id="KW-0472">Membrane</keyword>
<keyword id="KW-0597">Phosphoprotein</keyword>
<keyword id="KW-0654">Proteoglycan</keyword>
<keyword id="KW-0675">Receptor</keyword>
<keyword id="KW-1185">Reference proteome</keyword>
<keyword id="KW-0765">Sulfation</keyword>
<keyword id="KW-0807">Transducer</keyword>
<keyword id="KW-0812">Transmembrane</keyword>
<keyword id="KW-1133">Transmembrane helix</keyword>
<keyword id="KW-0832">Ubl conjugation</keyword>
<comment type="function">
    <text evidence="2 3">Receptor for the C-X-C chemokine CXCL12/SDF-1 that transduces a signal by increasing intracellular calcium ion levels and enhancing MAPK1/MAPK3 activation. Involved in the AKT signaling cascade (By similarity). Plays a role in regulation of cell migration, e.g. during wound healing. Acts as a receptor for extracellular ubiquitin; leading to enhanced intracellular calcium ions and reduced cellular cAMP levels. Binds bacterial lipopolysaccharide (LPS) et mediates LPS-induced inflammatory response, including TNF secretion by monocytes (By similarity). Involved in hematopoiesis and in cardiac ventricular septum formation. Also plays an essential role in vascularization of the gastrointestinal tract, probably by regulating vascular branching and/or remodeling processes in endothelial cells. Involved in cerebellar development. In the CNS, could mediate hippocampal-neuron survival (By similarity).</text>
</comment>
<comment type="subunit">
    <text evidence="2">Monomer. Can form homodimers. Interacts with CD164. Interacts with ARRB2; the interaction is dependent on the C-terminal phosphorylation of CXCR4 and allows activation of MAPK1 and MAPK3. Interacts with ARR3; the interaction is dependent on the C-terminal phosphorylation of CXCR4 and modulates calcium mobilization. Interacts with RNF113A; the interaction, enhanced by CXCL12, promotes CXCR4 ubiquitination and subsequent degradation. Interacts (via the cytoplasmic C-terminal) with ITCH (via the WW domains I and II); the interaction, enhanced by CXCL12, promotes CXCR4 ubiquitination and leads to its degradation. Interacts with extracellular ubiquitin. Interacts with DBN1; this interaction is enhanced by antigenic stimulation. Following LPS binding, may form a complex with GDF5, HSP90AA1 and HSPA8.</text>
</comment>
<comment type="subcellular location">
    <subcellularLocation>
        <location evidence="2">Cell membrane</location>
        <topology evidence="2">Multi-pass membrane protein</topology>
    </subcellularLocation>
    <subcellularLocation>
        <location evidence="1">Cell junction</location>
    </subcellularLocation>
    <subcellularLocation>
        <location evidence="1">Early endosome</location>
    </subcellularLocation>
    <subcellularLocation>
        <location evidence="1">Late endosome</location>
    </subcellularLocation>
    <subcellularLocation>
        <location evidence="1">Lysosome</location>
    </subcellularLocation>
    <text evidence="1">In unstimulated cells, diffuse pattern on plasma membrane. On agonist stimulation, colocalizes with ITCH at the plasma membrane where it becomes ubiquitinated (By similarity). In the presence of antigen, distributes to the immunological synapse forming at the T-cell-APC contact area, where it localizes at the peripheral and distal supramolecular activation cluster (SMAC) (By similarity).</text>
</comment>
<comment type="PTM">
    <text evidence="2">Phosphorylated on agonist stimulation. Rapidly phosphorylated on serine and threonine residues in the C-terminal. Phosphorylation at Ser-325 and Ser-326 leads to recruitment of ITCH, ubiquitination and protein degradation.</text>
</comment>
<comment type="PTM">
    <text evidence="2">Ubiquitinated after ligand binding, leading to its degradation. Ubiquitinated by ITCH at the cell membrane on agonist stimulation. The ubiquitin-dependent mechanism, endosomal sorting complex required for transport (ESCRT), then targets CXCR4 for lysosomal degradation. This process is dependent also on prior Ser-/Thr-phosphorylation in the C-terminal of CXCR4. Also binding of ARRB1 to STAM negatively regulates CXCR4 sorting to lysosomes though modulating ubiquitination of SFR5S.</text>
</comment>
<comment type="PTM">
    <text evidence="2">Sulfation is required for efficient binding of CXCL12/SDF-1alpha and promotes its dimerization.</text>
</comment>
<comment type="PTM">
    <text evidence="2">O- and N-glycosylated. N-glycosylation can mask coreceptor function. The O-glycosylation chondroitin sulfate attachment does not affect interaction with CXCL12/SDF-1alpha nor its coreceptor activity.</text>
</comment>
<comment type="similarity">
    <text evidence="4">Belongs to the G-protein coupled receptor 1 family.</text>
</comment>
<reference key="1">
    <citation type="journal article" date="1997" name="J. Virol.">
        <title>Shared usage of the chemokine receptor CXCR4 by the feline and human immunodeficiency viruses.</title>
        <authorList>
            <person name="Willett B.J."/>
            <person name="Picard L."/>
            <person name="Hosie M.J."/>
            <person name="Turner J.D."/>
            <person name="Adema K."/>
            <person name="Clapham P.R."/>
        </authorList>
    </citation>
    <scope>NUCLEOTIDE SEQUENCE [MRNA]</scope>
    <scope>CHARACTERISTICS OF FIV</scope>
    <source>
        <tissue>Kidney</tissue>
        <tissue>T-cell</tissue>
    </source>
</reference>
<reference key="2">
    <citation type="submission" date="1996-12" db="EMBL/GenBank/DDBJ databases">
        <authorList>
            <person name="Willett B.J."/>
        </authorList>
    </citation>
    <scope>NUCLEOTIDE SEQUENCE [MRNA]</scope>
    <source>
        <tissue>Lymphocyte</tissue>
    </source>
</reference>
<reference key="3">
    <citation type="submission" date="1997-03" db="EMBL/GenBank/DDBJ databases">
        <authorList>
            <person name="Lerner D.L."/>
            <person name="Elder J.H."/>
        </authorList>
    </citation>
    <scope>NUCLEOTIDE SEQUENCE [MRNA]</scope>
</reference>
<reference key="4">
    <citation type="journal article" date="1999" name="Arch. Virol.">
        <title>Feline peripheral blood mononuclear cells express message for both CXC and CC type chemokines.</title>
        <authorList>
            <person name="Kovacs E.M."/>
            <person name="Baxter G.D."/>
            <person name="Robinson W.F."/>
        </authorList>
    </citation>
    <scope>NUCLEOTIDE SEQUENCE [MRNA]</scope>
</reference>
<sequence>MDGFRIYPSDNYTEDDLGSGDYDSMKEPCFREENAHFNRIFLPTVYSIIFLTGIVGNGLVILVMGYQKKLRSMTDKYRLHLSVADLLFVLTLPFWAVDAVANWYFGKFLCKAVHVIYTVNLYSSVLILAFISLDRYLAIVHATNSQRPRKLLAEKVVYVGVWIPALLLTIPDFIFANVREADGRYICDRFYPSDSWLVVFQFQHIMVGLILPGIVILSCYCIIISKLSHSKGYQKRKALKTTVILILAFFACWLPYYIGISIDSFILLEIIKQGCEFESTVHKWISITEALAFFHCCLNPILYAFLGAKFKTSAQHALTSVSRGSSLKILSKGKRGGHSSVSTESESSSFHSS</sequence>
<feature type="chain" id="PRO_0000069351" description="C-X-C chemokine receptor type 4">
    <location>
        <begin position="1"/>
        <end position="353"/>
    </location>
</feature>
<feature type="topological domain" description="Extracellular" evidence="6">
    <location>
        <begin position="1"/>
        <end position="39"/>
    </location>
</feature>
<feature type="transmembrane region" description="Helical; Name=1" evidence="2">
    <location>
        <begin position="40"/>
        <end position="64"/>
    </location>
</feature>
<feature type="topological domain" description="Cytoplasmic" evidence="6">
    <location>
        <begin position="65"/>
        <end position="78"/>
    </location>
</feature>
<feature type="transmembrane region" description="Helical; Name=2" evidence="2">
    <location>
        <begin position="79"/>
        <end position="100"/>
    </location>
</feature>
<feature type="topological domain" description="Extracellular" evidence="6">
    <location>
        <begin position="101"/>
        <end position="111"/>
    </location>
</feature>
<feature type="transmembrane region" description="Helical; Name=3" evidence="2">
    <location>
        <begin position="112"/>
        <end position="131"/>
    </location>
</feature>
<feature type="topological domain" description="Cytoplasmic" evidence="6">
    <location>
        <begin position="132"/>
        <end position="155"/>
    </location>
</feature>
<feature type="transmembrane region" description="Helical; Name=4" evidence="2">
    <location>
        <begin position="156"/>
        <end position="175"/>
    </location>
</feature>
<feature type="topological domain" description="Extracellular" evidence="6">
    <location>
        <begin position="176"/>
        <end position="196"/>
    </location>
</feature>
<feature type="transmembrane region" description="Helical; Name=5" evidence="2">
    <location>
        <begin position="197"/>
        <end position="217"/>
    </location>
</feature>
<feature type="topological domain" description="Cytoplasmic" evidence="6">
    <location>
        <begin position="218"/>
        <end position="242"/>
    </location>
</feature>
<feature type="transmembrane region" description="Helical; Name=6" evidence="2">
    <location>
        <begin position="243"/>
        <end position="262"/>
    </location>
</feature>
<feature type="topological domain" description="Extracellular" evidence="6">
    <location>
        <begin position="263"/>
        <end position="283"/>
    </location>
</feature>
<feature type="transmembrane region" description="Helical; Name=7" evidence="2">
    <location>
        <begin position="284"/>
        <end position="303"/>
    </location>
</feature>
<feature type="topological domain" description="Cytoplasmic" evidence="6">
    <location>
        <begin position="304"/>
        <end position="353"/>
    </location>
</feature>
<feature type="region of interest" description="Important for chemokine binding and signaling" evidence="1">
    <location>
        <begin position="1"/>
        <end position="22"/>
    </location>
</feature>
<feature type="region of interest" description="Chemokine binding" evidence="1">
    <location>
        <begin position="95"/>
        <end position="98"/>
    </location>
</feature>
<feature type="region of interest" description="Chemokine binding" evidence="1">
    <location>
        <begin position="114"/>
        <end position="118"/>
    </location>
</feature>
<feature type="region of interest" description="Involved in dimerization; when bound to chemokine" evidence="1">
    <location>
        <begin position="136"/>
        <end position="148"/>
    </location>
</feature>
<feature type="region of interest" description="Chemokine binding, important for signaling" evidence="1">
    <location>
        <begin position="187"/>
        <end position="191"/>
    </location>
</feature>
<feature type="region of interest" description="Involved in dimerization" evidence="1">
    <location>
        <begin position="192"/>
        <end position="211"/>
    </location>
</feature>
<feature type="region of interest" description="Involved in dimerization" evidence="1">
    <location>
        <begin position="267"/>
        <end position="269"/>
    </location>
</feature>
<feature type="region of interest" description="Disordered" evidence="5">
    <location>
        <begin position="330"/>
        <end position="353"/>
    </location>
</feature>
<feature type="short sequence motif" description="Important for signaling" evidence="1">
    <location>
        <begin position="134"/>
        <end position="136"/>
    </location>
</feature>
<feature type="compositionally biased region" description="Low complexity" evidence="5">
    <location>
        <begin position="338"/>
        <end position="353"/>
    </location>
</feature>
<feature type="site" description="Chemokine binding" evidence="1">
    <location>
        <position position="172"/>
    </location>
</feature>
<feature type="site" description="Chemokine binding" evidence="1">
    <location>
        <position position="289"/>
    </location>
</feature>
<feature type="modified residue" description="Sulfotyrosine" evidence="2">
    <location>
        <position position="7"/>
    </location>
</feature>
<feature type="modified residue" description="Sulfotyrosine" evidence="2">
    <location>
        <position position="12"/>
    </location>
</feature>
<feature type="modified residue" description="Sulfotyrosine" evidence="2">
    <location>
        <position position="22"/>
    </location>
</feature>
<feature type="modified residue" description="Phosphoserine" evidence="2">
    <location>
        <position position="320"/>
    </location>
</feature>
<feature type="modified residue" description="Phosphoserine" evidence="2">
    <location>
        <position position="322"/>
    </location>
</feature>
<feature type="modified residue" description="Phosphoserine; by PKC and GRK6" evidence="2">
    <location>
        <position position="325"/>
    </location>
</feature>
<feature type="modified residue" description="Phosphoserine; by PKC and GRK6" evidence="2">
    <location>
        <position position="326"/>
    </location>
</feature>
<feature type="modified residue" description="Phosphoserine; by GRK6" evidence="2">
    <location>
        <position position="331"/>
    </location>
</feature>
<feature type="modified residue" description="Phosphoserine; by GRK6" evidence="2">
    <location>
        <position position="340"/>
    </location>
</feature>
<feature type="modified residue" description="Phosphoserine" evidence="2">
    <location>
        <position position="349"/>
    </location>
</feature>
<feature type="modified residue" description="Phosphoserine" evidence="2">
    <location>
        <position position="352"/>
    </location>
</feature>
<feature type="glycosylation site" description="N-linked (GlcNAc...) asparagine" evidence="1">
    <location>
        <position position="11"/>
    </location>
</feature>
<feature type="glycosylation site" description="O-linked (Xyl...) (chondroitin sulfate) serine" evidence="2">
    <location>
        <position position="19"/>
    </location>
</feature>
<feature type="disulfide bond" evidence="4">
    <location>
        <begin position="29"/>
        <end position="275"/>
    </location>
</feature>
<feature type="disulfide bond" evidence="4">
    <location>
        <begin position="110"/>
        <end position="187"/>
    </location>
</feature>
<feature type="cross-link" description="Glycyl lysine isopeptide (Lys-Gly) (interchain with G-Cter in ubiquitin)" evidence="2">
    <location>
        <position position="332"/>
    </location>
</feature>
<feature type="sequence conflict" description="In Ref. 3; AAB51765." evidence="6" ref="3">
    <original>Q</original>
    <variation>H</variation>
    <location>
        <position position="67"/>
    </location>
</feature>
<feature type="sequence conflict" description="In Ref. 3; AAB51765." evidence="6" ref="3">
    <original>D</original>
    <variation>E</variation>
    <location>
        <position position="263"/>
    </location>
</feature>
<proteinExistence type="evidence at transcript level"/>
<accession>P56498</accession>
<accession>O02700</accession>
<accession>P79172</accession>
<evidence type="ECO:0000250" key="1"/>
<evidence type="ECO:0000250" key="2">
    <source>
        <dbReference type="UniProtKB" id="P61073"/>
    </source>
</evidence>
<evidence type="ECO:0000250" key="3">
    <source>
        <dbReference type="UniProtKB" id="P70658"/>
    </source>
</evidence>
<evidence type="ECO:0000255" key="4">
    <source>
        <dbReference type="PROSITE-ProRule" id="PRU00521"/>
    </source>
</evidence>
<evidence type="ECO:0000256" key="5">
    <source>
        <dbReference type="SAM" id="MobiDB-lite"/>
    </source>
</evidence>
<evidence type="ECO:0000305" key="6"/>